<accession>B0BCA0</accession>
<comment type="function">
    <text evidence="1">Catalyzes the formation of 4-diphosphocytidyl-2-C-methyl-D-erythritol from CTP and 2-C-methyl-D-erythritol 4-phosphate (MEP).</text>
</comment>
<comment type="catalytic activity">
    <reaction evidence="1">
        <text>2-C-methyl-D-erythritol 4-phosphate + CTP + H(+) = 4-CDP-2-C-methyl-D-erythritol + diphosphate</text>
        <dbReference type="Rhea" id="RHEA:13429"/>
        <dbReference type="ChEBI" id="CHEBI:15378"/>
        <dbReference type="ChEBI" id="CHEBI:33019"/>
        <dbReference type="ChEBI" id="CHEBI:37563"/>
        <dbReference type="ChEBI" id="CHEBI:57823"/>
        <dbReference type="ChEBI" id="CHEBI:58262"/>
        <dbReference type="EC" id="2.7.7.60"/>
    </reaction>
</comment>
<comment type="pathway">
    <text evidence="1">Isoprenoid biosynthesis; isopentenyl diphosphate biosynthesis via DXP pathway; isopentenyl diphosphate from 1-deoxy-D-xylulose 5-phosphate: step 2/6.</text>
</comment>
<comment type="similarity">
    <text evidence="1">Belongs to the IspD/TarI cytidylyltransferase family. IspD subfamily.</text>
</comment>
<proteinExistence type="inferred from homology"/>
<organism>
    <name type="scientific">Chlamydia trachomatis serovar L2b (strain UCH-1/proctitis)</name>
    <dbReference type="NCBI Taxonomy" id="471473"/>
    <lineage>
        <taxon>Bacteria</taxon>
        <taxon>Pseudomonadati</taxon>
        <taxon>Chlamydiota</taxon>
        <taxon>Chlamydiia</taxon>
        <taxon>Chlamydiales</taxon>
        <taxon>Chlamydiaceae</taxon>
        <taxon>Chlamydia/Chlamydophila group</taxon>
        <taxon>Chlamydia</taxon>
    </lineage>
</organism>
<keyword id="KW-0414">Isoprene biosynthesis</keyword>
<keyword id="KW-0548">Nucleotidyltransferase</keyword>
<keyword id="KW-0808">Transferase</keyword>
<reference key="1">
    <citation type="journal article" date="2008" name="Genome Res.">
        <title>Chlamydia trachomatis: genome sequence analysis of lymphogranuloma venereum isolates.</title>
        <authorList>
            <person name="Thomson N.R."/>
            <person name="Holden M.T.G."/>
            <person name="Carder C."/>
            <person name="Lennard N."/>
            <person name="Lockey S.J."/>
            <person name="Marsh P."/>
            <person name="Skipp P."/>
            <person name="O'Connor C.D."/>
            <person name="Goodhead I."/>
            <person name="Norbertzcak H."/>
            <person name="Harris B."/>
            <person name="Ormond D."/>
            <person name="Rance R."/>
            <person name="Quail M.A."/>
            <person name="Parkhill J."/>
            <person name="Stephens R.S."/>
            <person name="Clarke I.N."/>
        </authorList>
    </citation>
    <scope>NUCLEOTIDE SEQUENCE [LARGE SCALE GENOMIC DNA]</scope>
    <source>
        <strain>UCH-1/proctitis</strain>
    </source>
</reference>
<evidence type="ECO:0000255" key="1">
    <source>
        <dbReference type="HAMAP-Rule" id="MF_00108"/>
    </source>
</evidence>
<dbReference type="EC" id="2.7.7.60" evidence="1"/>
<dbReference type="EMBL" id="AM884177">
    <property type="protein sequence ID" value="CAP07115.1"/>
    <property type="molecule type" value="Genomic_DNA"/>
</dbReference>
<dbReference type="RefSeq" id="WP_009873830.1">
    <property type="nucleotide sequence ID" value="NC_010280.2"/>
</dbReference>
<dbReference type="SMR" id="B0BCA0"/>
<dbReference type="KEGG" id="ctl:CTLon_0718"/>
<dbReference type="HOGENOM" id="CLU_061281_2_3_0"/>
<dbReference type="UniPathway" id="UPA00056">
    <property type="reaction ID" value="UER00093"/>
</dbReference>
<dbReference type="Proteomes" id="UP001154401">
    <property type="component" value="Chromosome"/>
</dbReference>
<dbReference type="GO" id="GO:0050518">
    <property type="term" value="F:2-C-methyl-D-erythritol 4-phosphate cytidylyltransferase activity"/>
    <property type="evidence" value="ECO:0007669"/>
    <property type="project" value="UniProtKB-UniRule"/>
</dbReference>
<dbReference type="GO" id="GO:0019288">
    <property type="term" value="P:isopentenyl diphosphate biosynthetic process, methylerythritol 4-phosphate pathway"/>
    <property type="evidence" value="ECO:0007669"/>
    <property type="project" value="UniProtKB-UniRule"/>
</dbReference>
<dbReference type="CDD" id="cd02516">
    <property type="entry name" value="CDP-ME_synthetase"/>
    <property type="match status" value="1"/>
</dbReference>
<dbReference type="FunFam" id="3.90.550.10:FF:000269">
    <property type="entry name" value="2-C-methyl-D-erythritol 4-phosphate cytidylyltransferase"/>
    <property type="match status" value="1"/>
</dbReference>
<dbReference type="Gene3D" id="3.90.550.10">
    <property type="entry name" value="Spore Coat Polysaccharide Biosynthesis Protein SpsA, Chain A"/>
    <property type="match status" value="1"/>
</dbReference>
<dbReference type="HAMAP" id="MF_00108">
    <property type="entry name" value="IspD"/>
    <property type="match status" value="1"/>
</dbReference>
<dbReference type="InterPro" id="IPR001228">
    <property type="entry name" value="IspD"/>
</dbReference>
<dbReference type="InterPro" id="IPR034683">
    <property type="entry name" value="IspD/TarI"/>
</dbReference>
<dbReference type="InterPro" id="IPR050088">
    <property type="entry name" value="IspD/TarI_cytidylyltransf_bact"/>
</dbReference>
<dbReference type="InterPro" id="IPR018294">
    <property type="entry name" value="ISPD_synthase_CS"/>
</dbReference>
<dbReference type="InterPro" id="IPR029044">
    <property type="entry name" value="Nucleotide-diphossugar_trans"/>
</dbReference>
<dbReference type="NCBIfam" id="TIGR00453">
    <property type="entry name" value="ispD"/>
    <property type="match status" value="1"/>
</dbReference>
<dbReference type="PANTHER" id="PTHR32125">
    <property type="entry name" value="2-C-METHYL-D-ERYTHRITOL 4-PHOSPHATE CYTIDYLYLTRANSFERASE, CHLOROPLASTIC"/>
    <property type="match status" value="1"/>
</dbReference>
<dbReference type="PANTHER" id="PTHR32125:SF4">
    <property type="entry name" value="2-C-METHYL-D-ERYTHRITOL 4-PHOSPHATE CYTIDYLYLTRANSFERASE, CHLOROPLASTIC"/>
    <property type="match status" value="1"/>
</dbReference>
<dbReference type="Pfam" id="PF01128">
    <property type="entry name" value="IspD"/>
    <property type="match status" value="1"/>
</dbReference>
<dbReference type="SUPFAM" id="SSF53448">
    <property type="entry name" value="Nucleotide-diphospho-sugar transferases"/>
    <property type="match status" value="1"/>
</dbReference>
<dbReference type="PROSITE" id="PS01295">
    <property type="entry name" value="ISPD"/>
    <property type="match status" value="1"/>
</dbReference>
<protein>
    <recommendedName>
        <fullName evidence="1">2-C-methyl-D-erythritol 4-phosphate cytidylyltransferase</fullName>
        <ecNumber evidence="1">2.7.7.60</ecNumber>
    </recommendedName>
    <alternativeName>
        <fullName evidence="1">4-diphosphocytidyl-2C-methyl-D-erythritol synthase</fullName>
    </alternativeName>
    <alternativeName>
        <fullName evidence="1">MEP cytidylyltransferase</fullName>
        <shortName evidence="1">MCT</shortName>
    </alternativeName>
</protein>
<feature type="chain" id="PRO_1000094320" description="2-C-methyl-D-erythritol 4-phosphate cytidylyltransferase">
    <location>
        <begin position="1"/>
        <end position="219"/>
    </location>
</feature>
<feature type="site" description="Transition state stabilizer" evidence="1">
    <location>
        <position position="17"/>
    </location>
</feature>
<feature type="site" description="Transition state stabilizer" evidence="1">
    <location>
        <position position="24"/>
    </location>
</feature>
<feature type="site" description="Positions MEP for the nucleophilic attack" evidence="1">
    <location>
        <position position="142"/>
    </location>
</feature>
<feature type="site" description="Positions MEP for the nucleophilic attack" evidence="1">
    <location>
        <position position="198"/>
    </location>
</feature>
<gene>
    <name evidence="1" type="primary">ispD</name>
    <name type="ordered locus">CTLon_0718</name>
</gene>
<sequence>MNLSCSLVLLGGGKGERFNSLQPKQYTHLCGEPLILHALHAYQRLPFVQEVVVVCEEQYRELFLPYSVKFASPGTLRQDSVFSGLQQVFTPWVCIHDGVRPFVYADEVIEVCSAARKTGAAALASPATYTIKSCAPVRTLDRDALAVIHTPQCLDTEVLREGLLLARAMDFSLSDDTEAAELLGIEPTLVFSNRVQIKVTYPEDLLFAETLLSKSSTYK</sequence>
<name>ISPD_CHLTB</name>